<evidence type="ECO:0000250" key="1"/>
<evidence type="ECO:0000255" key="2">
    <source>
        <dbReference type="PROSITE-ProRule" id="PRU00541"/>
    </source>
</evidence>
<evidence type="ECO:0000255" key="3">
    <source>
        <dbReference type="PROSITE-ProRule" id="PRU00542"/>
    </source>
</evidence>
<evidence type="ECO:0000305" key="4"/>
<name>FAL1_KLULA</name>
<organism>
    <name type="scientific">Kluyveromyces lactis (strain ATCC 8585 / CBS 2359 / DSM 70799 / NBRC 1267 / NRRL Y-1140 / WM37)</name>
    <name type="common">Yeast</name>
    <name type="synonym">Candida sphaerica</name>
    <dbReference type="NCBI Taxonomy" id="284590"/>
    <lineage>
        <taxon>Eukaryota</taxon>
        <taxon>Fungi</taxon>
        <taxon>Dikarya</taxon>
        <taxon>Ascomycota</taxon>
        <taxon>Saccharomycotina</taxon>
        <taxon>Saccharomycetes</taxon>
        <taxon>Saccharomycetales</taxon>
        <taxon>Saccharomycetaceae</taxon>
        <taxon>Kluyveromyces</taxon>
    </lineage>
</organism>
<dbReference type="EC" id="3.6.4.13"/>
<dbReference type="EMBL" id="CR382121">
    <property type="protein sequence ID" value="CAH03054.1"/>
    <property type="molecule type" value="Genomic_DNA"/>
</dbReference>
<dbReference type="RefSeq" id="XP_451466.1">
    <property type="nucleotide sequence ID" value="XM_451466.1"/>
</dbReference>
<dbReference type="SMR" id="Q6CX73"/>
<dbReference type="FunCoup" id="Q6CX73">
    <property type="interactions" value="718"/>
</dbReference>
<dbReference type="STRING" id="284590.Q6CX73"/>
<dbReference type="PaxDb" id="284590-Q6CX73"/>
<dbReference type="KEGG" id="kla:KLLA0_A10659g"/>
<dbReference type="eggNOG" id="KOG0328">
    <property type="taxonomic scope" value="Eukaryota"/>
</dbReference>
<dbReference type="HOGENOM" id="CLU_003041_1_0_1"/>
<dbReference type="InParanoid" id="Q6CX73"/>
<dbReference type="OMA" id="DTIHGDK"/>
<dbReference type="Proteomes" id="UP000000598">
    <property type="component" value="Chromosome A"/>
</dbReference>
<dbReference type="GO" id="GO:0005730">
    <property type="term" value="C:nucleolus"/>
    <property type="evidence" value="ECO:0007669"/>
    <property type="project" value="UniProtKB-SubCell"/>
</dbReference>
<dbReference type="GO" id="GO:0005524">
    <property type="term" value="F:ATP binding"/>
    <property type="evidence" value="ECO:0007669"/>
    <property type="project" value="UniProtKB-KW"/>
</dbReference>
<dbReference type="GO" id="GO:0016887">
    <property type="term" value="F:ATP hydrolysis activity"/>
    <property type="evidence" value="ECO:0007669"/>
    <property type="project" value="RHEA"/>
</dbReference>
<dbReference type="GO" id="GO:0003723">
    <property type="term" value="F:RNA binding"/>
    <property type="evidence" value="ECO:0007669"/>
    <property type="project" value="UniProtKB-KW"/>
</dbReference>
<dbReference type="GO" id="GO:0003724">
    <property type="term" value="F:RNA helicase activity"/>
    <property type="evidence" value="ECO:0007669"/>
    <property type="project" value="UniProtKB-EC"/>
</dbReference>
<dbReference type="GO" id="GO:0006364">
    <property type="term" value="P:rRNA processing"/>
    <property type="evidence" value="ECO:0007669"/>
    <property type="project" value="UniProtKB-KW"/>
</dbReference>
<dbReference type="CDD" id="cd18787">
    <property type="entry name" value="SF2_C_DEAD"/>
    <property type="match status" value="1"/>
</dbReference>
<dbReference type="FunFam" id="3.40.50.300:FF:000849">
    <property type="entry name" value="ATP-dependent RNA helicase DBP5"/>
    <property type="match status" value="1"/>
</dbReference>
<dbReference type="FunFam" id="3.40.50.300:FF:000031">
    <property type="entry name" value="Eukaryotic initiation factor 4A-III"/>
    <property type="match status" value="1"/>
</dbReference>
<dbReference type="Gene3D" id="3.40.50.300">
    <property type="entry name" value="P-loop containing nucleotide triphosphate hydrolases"/>
    <property type="match status" value="2"/>
</dbReference>
<dbReference type="InterPro" id="IPR011545">
    <property type="entry name" value="DEAD/DEAH_box_helicase_dom"/>
</dbReference>
<dbReference type="InterPro" id="IPR014001">
    <property type="entry name" value="Helicase_ATP-bd"/>
</dbReference>
<dbReference type="InterPro" id="IPR001650">
    <property type="entry name" value="Helicase_C-like"/>
</dbReference>
<dbReference type="InterPro" id="IPR027417">
    <property type="entry name" value="P-loop_NTPase"/>
</dbReference>
<dbReference type="InterPro" id="IPR000629">
    <property type="entry name" value="RNA-helicase_DEAD-box_CS"/>
</dbReference>
<dbReference type="InterPro" id="IPR014014">
    <property type="entry name" value="RNA_helicase_DEAD_Q_motif"/>
</dbReference>
<dbReference type="PANTHER" id="PTHR47958">
    <property type="entry name" value="ATP-DEPENDENT RNA HELICASE DBP3"/>
    <property type="match status" value="1"/>
</dbReference>
<dbReference type="Pfam" id="PF00270">
    <property type="entry name" value="DEAD"/>
    <property type="match status" value="1"/>
</dbReference>
<dbReference type="Pfam" id="PF00271">
    <property type="entry name" value="Helicase_C"/>
    <property type="match status" value="1"/>
</dbReference>
<dbReference type="SMART" id="SM00487">
    <property type="entry name" value="DEXDc"/>
    <property type="match status" value="1"/>
</dbReference>
<dbReference type="SMART" id="SM00490">
    <property type="entry name" value="HELICc"/>
    <property type="match status" value="1"/>
</dbReference>
<dbReference type="SUPFAM" id="SSF52540">
    <property type="entry name" value="P-loop containing nucleoside triphosphate hydrolases"/>
    <property type="match status" value="1"/>
</dbReference>
<dbReference type="PROSITE" id="PS00039">
    <property type="entry name" value="DEAD_ATP_HELICASE"/>
    <property type="match status" value="1"/>
</dbReference>
<dbReference type="PROSITE" id="PS51192">
    <property type="entry name" value="HELICASE_ATP_BIND_1"/>
    <property type="match status" value="1"/>
</dbReference>
<dbReference type="PROSITE" id="PS51194">
    <property type="entry name" value="HELICASE_CTER"/>
    <property type="match status" value="1"/>
</dbReference>
<dbReference type="PROSITE" id="PS51195">
    <property type="entry name" value="Q_MOTIF"/>
    <property type="match status" value="1"/>
</dbReference>
<feature type="chain" id="PRO_0000232149" description="ATP-dependent RNA helicase FAL1">
    <location>
        <begin position="1"/>
        <end position="398"/>
    </location>
</feature>
<feature type="domain" description="Helicase ATP-binding" evidence="2">
    <location>
        <begin position="54"/>
        <end position="226"/>
    </location>
</feature>
<feature type="domain" description="Helicase C-terminal" evidence="3">
    <location>
        <begin position="237"/>
        <end position="398"/>
    </location>
</feature>
<feature type="short sequence motif" description="Q motif">
    <location>
        <begin position="23"/>
        <end position="51"/>
    </location>
</feature>
<feature type="short sequence motif" description="DEAD box">
    <location>
        <begin position="172"/>
        <end position="175"/>
    </location>
</feature>
<feature type="binding site" evidence="2">
    <location>
        <begin position="67"/>
        <end position="74"/>
    </location>
    <ligand>
        <name>ATP</name>
        <dbReference type="ChEBI" id="CHEBI:30616"/>
    </ligand>
</feature>
<reference key="1">
    <citation type="journal article" date="2004" name="Nature">
        <title>Genome evolution in yeasts.</title>
        <authorList>
            <person name="Dujon B."/>
            <person name="Sherman D."/>
            <person name="Fischer G."/>
            <person name="Durrens P."/>
            <person name="Casaregola S."/>
            <person name="Lafontaine I."/>
            <person name="de Montigny J."/>
            <person name="Marck C."/>
            <person name="Neuveglise C."/>
            <person name="Talla E."/>
            <person name="Goffard N."/>
            <person name="Frangeul L."/>
            <person name="Aigle M."/>
            <person name="Anthouard V."/>
            <person name="Babour A."/>
            <person name="Barbe V."/>
            <person name="Barnay S."/>
            <person name="Blanchin S."/>
            <person name="Beckerich J.-M."/>
            <person name="Beyne E."/>
            <person name="Bleykasten C."/>
            <person name="Boisrame A."/>
            <person name="Boyer J."/>
            <person name="Cattolico L."/>
            <person name="Confanioleri F."/>
            <person name="de Daruvar A."/>
            <person name="Despons L."/>
            <person name="Fabre E."/>
            <person name="Fairhead C."/>
            <person name="Ferry-Dumazet H."/>
            <person name="Groppi A."/>
            <person name="Hantraye F."/>
            <person name="Hennequin C."/>
            <person name="Jauniaux N."/>
            <person name="Joyet P."/>
            <person name="Kachouri R."/>
            <person name="Kerrest A."/>
            <person name="Koszul R."/>
            <person name="Lemaire M."/>
            <person name="Lesur I."/>
            <person name="Ma L."/>
            <person name="Muller H."/>
            <person name="Nicaud J.-M."/>
            <person name="Nikolski M."/>
            <person name="Oztas S."/>
            <person name="Ozier-Kalogeropoulos O."/>
            <person name="Pellenz S."/>
            <person name="Potier S."/>
            <person name="Richard G.-F."/>
            <person name="Straub M.-L."/>
            <person name="Suleau A."/>
            <person name="Swennen D."/>
            <person name="Tekaia F."/>
            <person name="Wesolowski-Louvel M."/>
            <person name="Westhof E."/>
            <person name="Wirth B."/>
            <person name="Zeniou-Meyer M."/>
            <person name="Zivanovic Y."/>
            <person name="Bolotin-Fukuhara M."/>
            <person name="Thierry A."/>
            <person name="Bouchier C."/>
            <person name="Caudron B."/>
            <person name="Scarpelli C."/>
            <person name="Gaillardin C."/>
            <person name="Weissenbach J."/>
            <person name="Wincker P."/>
            <person name="Souciet J.-L."/>
        </authorList>
    </citation>
    <scope>NUCLEOTIDE SEQUENCE [LARGE SCALE GENOMIC DNA]</scope>
    <source>
        <strain>ATCC 8585 / CBS 2359 / DSM 70799 / NBRC 1267 / NRRL Y-1140 / WM37</strain>
    </source>
</reference>
<protein>
    <recommendedName>
        <fullName>ATP-dependent RNA helicase FAL1</fullName>
        <ecNumber>3.6.4.13</ecNumber>
    </recommendedName>
</protein>
<keyword id="KW-0067">ATP-binding</keyword>
<keyword id="KW-0347">Helicase</keyword>
<keyword id="KW-0378">Hydrolase</keyword>
<keyword id="KW-0547">Nucleotide-binding</keyword>
<keyword id="KW-0539">Nucleus</keyword>
<keyword id="KW-1185">Reference proteome</keyword>
<keyword id="KW-0690">Ribosome biogenesis</keyword>
<keyword id="KW-0694">RNA-binding</keyword>
<keyword id="KW-0698">rRNA processing</keyword>
<sequence>MSFNRDDDSKLKFKTSKKLKVSATFESMNLKPDLLRGIYFYGFEYPSSIQSRAISQIISGKDVIAQAQSGTGKTATFTIGLLQAIDSKSKELQALVLSPTRELASQSESVISNLGDYLNVTAHACTGGKALQQDIKKVSKNCQVVSGTPGRVLDMIKRQVLNVRNCKILVLDEADELLGETLGFKQQIYDIFTKLPPTIQVVVVSATMSKDILEITKKFMSDPVKILVKRDEISLDVIKQYYVDVEKEEWKFDTLCDLYDSLTITQCVIFCNTRKKVDWLSRKLTQTNFSVSSMHGDMKQEERDQVMNDFRSGKARVLISTDVWARGIDVQQISLVINYDIPDNLENYIHRIGRSGRFGRKGVAINFITKEERPKLKEIESHYRIKIKPTPANLEELS</sequence>
<accession>Q6CX73</accession>
<comment type="function">
    <text evidence="1">ATP-dependent RNA helicase involved in 40S ribosomal subunit biogenesis. Required for the processing and cleavage of 35S pre-rRNA at sites A0, A1, and A2, leading to mature 18S rRNA (By similarity).</text>
</comment>
<comment type="catalytic activity">
    <reaction>
        <text>ATP + H2O = ADP + phosphate + H(+)</text>
        <dbReference type="Rhea" id="RHEA:13065"/>
        <dbReference type="ChEBI" id="CHEBI:15377"/>
        <dbReference type="ChEBI" id="CHEBI:15378"/>
        <dbReference type="ChEBI" id="CHEBI:30616"/>
        <dbReference type="ChEBI" id="CHEBI:43474"/>
        <dbReference type="ChEBI" id="CHEBI:456216"/>
        <dbReference type="EC" id="3.6.4.13"/>
    </reaction>
</comment>
<comment type="subcellular location">
    <subcellularLocation>
        <location evidence="1">Nucleus</location>
        <location evidence="1">Nucleolus</location>
    </subcellularLocation>
</comment>
<comment type="domain">
    <text>The Q motif is unique to and characteristic of the DEAD box family of RNA helicases and controls ATP binding and hydrolysis.</text>
</comment>
<comment type="similarity">
    <text evidence="4">Belongs to the DEAD box helicase family. DDX48/FAL1 subfamily.</text>
</comment>
<proteinExistence type="inferred from homology"/>
<gene>
    <name type="primary">FAL1</name>
    <name type="ordered locus">KLLA0A10659g</name>
</gene>